<name>RL29_YERPA</name>
<feature type="chain" id="PRO_1000007657" description="Large ribosomal subunit protein uL29">
    <location>
        <begin position="1"/>
        <end position="63"/>
    </location>
</feature>
<accession>Q1C2V5</accession>
<proteinExistence type="inferred from homology"/>
<dbReference type="EMBL" id="CP000308">
    <property type="protein sequence ID" value="ABG15217.1"/>
    <property type="molecule type" value="Genomic_DNA"/>
</dbReference>
<dbReference type="RefSeq" id="WP_002218942.1">
    <property type="nucleotide sequence ID" value="NZ_CP009906.1"/>
</dbReference>
<dbReference type="SMR" id="Q1C2V5"/>
<dbReference type="GeneID" id="96663188"/>
<dbReference type="KEGG" id="ypa:YPA_3255"/>
<dbReference type="Proteomes" id="UP000001971">
    <property type="component" value="Chromosome"/>
</dbReference>
<dbReference type="GO" id="GO:0022625">
    <property type="term" value="C:cytosolic large ribosomal subunit"/>
    <property type="evidence" value="ECO:0007669"/>
    <property type="project" value="TreeGrafter"/>
</dbReference>
<dbReference type="GO" id="GO:0003735">
    <property type="term" value="F:structural constituent of ribosome"/>
    <property type="evidence" value="ECO:0007669"/>
    <property type="project" value="InterPro"/>
</dbReference>
<dbReference type="GO" id="GO:0006412">
    <property type="term" value="P:translation"/>
    <property type="evidence" value="ECO:0007669"/>
    <property type="project" value="UniProtKB-UniRule"/>
</dbReference>
<dbReference type="CDD" id="cd00427">
    <property type="entry name" value="Ribosomal_L29_HIP"/>
    <property type="match status" value="1"/>
</dbReference>
<dbReference type="FunFam" id="1.10.287.310:FF:000001">
    <property type="entry name" value="50S ribosomal protein L29"/>
    <property type="match status" value="1"/>
</dbReference>
<dbReference type="Gene3D" id="6.10.140.1970">
    <property type="match status" value="1"/>
</dbReference>
<dbReference type="HAMAP" id="MF_00374">
    <property type="entry name" value="Ribosomal_uL29"/>
    <property type="match status" value="1"/>
</dbReference>
<dbReference type="InterPro" id="IPR050063">
    <property type="entry name" value="Ribosomal_protein_uL29"/>
</dbReference>
<dbReference type="InterPro" id="IPR001854">
    <property type="entry name" value="Ribosomal_uL29"/>
</dbReference>
<dbReference type="InterPro" id="IPR018254">
    <property type="entry name" value="Ribosomal_uL29_CS"/>
</dbReference>
<dbReference type="InterPro" id="IPR036049">
    <property type="entry name" value="Ribosomal_uL29_sf"/>
</dbReference>
<dbReference type="NCBIfam" id="TIGR00012">
    <property type="entry name" value="L29"/>
    <property type="match status" value="1"/>
</dbReference>
<dbReference type="PANTHER" id="PTHR10916">
    <property type="entry name" value="60S RIBOSOMAL PROTEIN L35/50S RIBOSOMAL PROTEIN L29"/>
    <property type="match status" value="1"/>
</dbReference>
<dbReference type="PANTHER" id="PTHR10916:SF0">
    <property type="entry name" value="LARGE RIBOSOMAL SUBUNIT PROTEIN UL29C"/>
    <property type="match status" value="1"/>
</dbReference>
<dbReference type="Pfam" id="PF00831">
    <property type="entry name" value="Ribosomal_L29"/>
    <property type="match status" value="1"/>
</dbReference>
<dbReference type="SUPFAM" id="SSF46561">
    <property type="entry name" value="Ribosomal protein L29 (L29p)"/>
    <property type="match status" value="1"/>
</dbReference>
<dbReference type="PROSITE" id="PS00579">
    <property type="entry name" value="RIBOSOMAL_L29"/>
    <property type="match status" value="1"/>
</dbReference>
<organism>
    <name type="scientific">Yersinia pestis bv. Antiqua (strain Antiqua)</name>
    <dbReference type="NCBI Taxonomy" id="360102"/>
    <lineage>
        <taxon>Bacteria</taxon>
        <taxon>Pseudomonadati</taxon>
        <taxon>Pseudomonadota</taxon>
        <taxon>Gammaproteobacteria</taxon>
        <taxon>Enterobacterales</taxon>
        <taxon>Yersiniaceae</taxon>
        <taxon>Yersinia</taxon>
    </lineage>
</organism>
<protein>
    <recommendedName>
        <fullName evidence="1">Large ribosomal subunit protein uL29</fullName>
    </recommendedName>
    <alternativeName>
        <fullName evidence="2">50S ribosomal protein L29</fullName>
    </alternativeName>
</protein>
<reference key="1">
    <citation type="journal article" date="2006" name="J. Bacteriol.">
        <title>Complete genome sequence of Yersinia pestis strains Antiqua and Nepal516: evidence of gene reduction in an emerging pathogen.</title>
        <authorList>
            <person name="Chain P.S.G."/>
            <person name="Hu P."/>
            <person name="Malfatti S.A."/>
            <person name="Radnedge L."/>
            <person name="Larimer F."/>
            <person name="Vergez L.M."/>
            <person name="Worsham P."/>
            <person name="Chu M.C."/>
            <person name="Andersen G.L."/>
        </authorList>
    </citation>
    <scope>NUCLEOTIDE SEQUENCE [LARGE SCALE GENOMIC DNA]</scope>
    <source>
        <strain>Antiqua</strain>
    </source>
</reference>
<keyword id="KW-0687">Ribonucleoprotein</keyword>
<keyword id="KW-0689">Ribosomal protein</keyword>
<gene>
    <name evidence="1" type="primary">rpmC</name>
    <name type="ordered locus">YPA_3255</name>
</gene>
<sequence length="63" mass="7273">MKAQELREKSVEELNTELLNLLREQFNLRMQAASGQLQQTHLLKQVRRNVARVKTLLTEKAGA</sequence>
<comment type="similarity">
    <text evidence="1">Belongs to the universal ribosomal protein uL29 family.</text>
</comment>
<evidence type="ECO:0000255" key="1">
    <source>
        <dbReference type="HAMAP-Rule" id="MF_00374"/>
    </source>
</evidence>
<evidence type="ECO:0000305" key="2"/>